<protein>
    <recommendedName>
        <fullName evidence="1">Imidazoleglycerol-phosphate dehydratase</fullName>
        <shortName evidence="1">IGPD</shortName>
        <ecNumber evidence="1">4.2.1.19</ecNumber>
    </recommendedName>
</protein>
<gene>
    <name evidence="1" type="primary">hisB</name>
    <name type="ordered locus">Plav_1237</name>
</gene>
<accession>A7HSH4</accession>
<evidence type="ECO:0000255" key="1">
    <source>
        <dbReference type="HAMAP-Rule" id="MF_00076"/>
    </source>
</evidence>
<organism>
    <name type="scientific">Parvibaculum lavamentivorans (strain DS-1 / DSM 13023 / NCIMB 13966)</name>
    <dbReference type="NCBI Taxonomy" id="402881"/>
    <lineage>
        <taxon>Bacteria</taxon>
        <taxon>Pseudomonadati</taxon>
        <taxon>Pseudomonadota</taxon>
        <taxon>Alphaproteobacteria</taxon>
        <taxon>Hyphomicrobiales</taxon>
        <taxon>Parvibaculaceae</taxon>
        <taxon>Parvibaculum</taxon>
    </lineage>
</organism>
<feature type="chain" id="PRO_0000336328" description="Imidazoleglycerol-phosphate dehydratase">
    <location>
        <begin position="1"/>
        <end position="203"/>
    </location>
</feature>
<name>HIS7_PARL1</name>
<comment type="catalytic activity">
    <reaction evidence="1">
        <text>D-erythro-1-(imidazol-4-yl)glycerol 3-phosphate = 3-(imidazol-4-yl)-2-oxopropyl phosphate + H2O</text>
        <dbReference type="Rhea" id="RHEA:11040"/>
        <dbReference type="ChEBI" id="CHEBI:15377"/>
        <dbReference type="ChEBI" id="CHEBI:57766"/>
        <dbReference type="ChEBI" id="CHEBI:58278"/>
        <dbReference type="EC" id="4.2.1.19"/>
    </reaction>
</comment>
<comment type="pathway">
    <text evidence="1">Amino-acid biosynthesis; L-histidine biosynthesis; L-histidine from 5-phospho-alpha-D-ribose 1-diphosphate: step 6/9.</text>
</comment>
<comment type="subcellular location">
    <subcellularLocation>
        <location evidence="1">Cytoplasm</location>
    </subcellularLocation>
</comment>
<comment type="similarity">
    <text evidence="1">Belongs to the imidazoleglycerol-phosphate dehydratase family.</text>
</comment>
<dbReference type="EC" id="4.2.1.19" evidence="1"/>
<dbReference type="EMBL" id="CP000774">
    <property type="protein sequence ID" value="ABS62857.1"/>
    <property type="molecule type" value="Genomic_DNA"/>
</dbReference>
<dbReference type="RefSeq" id="WP_012110125.1">
    <property type="nucleotide sequence ID" value="NC_009719.1"/>
</dbReference>
<dbReference type="SMR" id="A7HSH4"/>
<dbReference type="STRING" id="402881.Plav_1237"/>
<dbReference type="KEGG" id="pla:Plav_1237"/>
<dbReference type="eggNOG" id="COG0131">
    <property type="taxonomic scope" value="Bacteria"/>
</dbReference>
<dbReference type="HOGENOM" id="CLU_044308_3_0_5"/>
<dbReference type="OrthoDB" id="9813612at2"/>
<dbReference type="UniPathway" id="UPA00031">
    <property type="reaction ID" value="UER00011"/>
</dbReference>
<dbReference type="Proteomes" id="UP000006377">
    <property type="component" value="Chromosome"/>
</dbReference>
<dbReference type="GO" id="GO:0005737">
    <property type="term" value="C:cytoplasm"/>
    <property type="evidence" value="ECO:0007669"/>
    <property type="project" value="UniProtKB-SubCell"/>
</dbReference>
<dbReference type="GO" id="GO:0004424">
    <property type="term" value="F:imidazoleglycerol-phosphate dehydratase activity"/>
    <property type="evidence" value="ECO:0007669"/>
    <property type="project" value="UniProtKB-UniRule"/>
</dbReference>
<dbReference type="GO" id="GO:0000105">
    <property type="term" value="P:L-histidine biosynthetic process"/>
    <property type="evidence" value="ECO:0007669"/>
    <property type="project" value="UniProtKB-UniRule"/>
</dbReference>
<dbReference type="CDD" id="cd07914">
    <property type="entry name" value="IGPD"/>
    <property type="match status" value="1"/>
</dbReference>
<dbReference type="FunFam" id="3.30.230.40:FF:000001">
    <property type="entry name" value="Imidazoleglycerol-phosphate dehydratase HisB"/>
    <property type="match status" value="1"/>
</dbReference>
<dbReference type="FunFam" id="3.30.230.40:FF:000003">
    <property type="entry name" value="Imidazoleglycerol-phosphate dehydratase HisB"/>
    <property type="match status" value="1"/>
</dbReference>
<dbReference type="Gene3D" id="3.30.230.40">
    <property type="entry name" value="Imidazole glycerol phosphate dehydratase, domain 1"/>
    <property type="match status" value="2"/>
</dbReference>
<dbReference type="HAMAP" id="MF_00076">
    <property type="entry name" value="HisB"/>
    <property type="match status" value="1"/>
</dbReference>
<dbReference type="InterPro" id="IPR038494">
    <property type="entry name" value="IGPD_sf"/>
</dbReference>
<dbReference type="InterPro" id="IPR000807">
    <property type="entry name" value="ImidazoleglycerolP_deHydtase"/>
</dbReference>
<dbReference type="InterPro" id="IPR020565">
    <property type="entry name" value="ImidazoleglycerP_deHydtase_CS"/>
</dbReference>
<dbReference type="InterPro" id="IPR020568">
    <property type="entry name" value="Ribosomal_Su5_D2-typ_SF"/>
</dbReference>
<dbReference type="NCBIfam" id="NF002109">
    <property type="entry name" value="PRK00951.1-5"/>
    <property type="match status" value="1"/>
</dbReference>
<dbReference type="NCBIfam" id="NF002111">
    <property type="entry name" value="PRK00951.2-1"/>
    <property type="match status" value="1"/>
</dbReference>
<dbReference type="NCBIfam" id="NF002114">
    <property type="entry name" value="PRK00951.2-4"/>
    <property type="match status" value="1"/>
</dbReference>
<dbReference type="PANTHER" id="PTHR23133:SF2">
    <property type="entry name" value="IMIDAZOLEGLYCEROL-PHOSPHATE DEHYDRATASE"/>
    <property type="match status" value="1"/>
</dbReference>
<dbReference type="PANTHER" id="PTHR23133">
    <property type="entry name" value="IMIDAZOLEGLYCEROL-PHOSPHATE DEHYDRATASE HIS7"/>
    <property type="match status" value="1"/>
</dbReference>
<dbReference type="Pfam" id="PF00475">
    <property type="entry name" value="IGPD"/>
    <property type="match status" value="1"/>
</dbReference>
<dbReference type="SUPFAM" id="SSF54211">
    <property type="entry name" value="Ribosomal protein S5 domain 2-like"/>
    <property type="match status" value="2"/>
</dbReference>
<dbReference type="PROSITE" id="PS00954">
    <property type="entry name" value="IGP_DEHYDRATASE_1"/>
    <property type="match status" value="1"/>
</dbReference>
<dbReference type="PROSITE" id="PS00955">
    <property type="entry name" value="IGP_DEHYDRATASE_2"/>
    <property type="match status" value="1"/>
</dbReference>
<proteinExistence type="inferred from homology"/>
<keyword id="KW-0028">Amino-acid biosynthesis</keyword>
<keyword id="KW-0963">Cytoplasm</keyword>
<keyword id="KW-0368">Histidine biosynthesis</keyword>
<keyword id="KW-0456">Lyase</keyword>
<keyword id="KW-1185">Reference proteome</keyword>
<sequence>MQTDSDTRIATVERKTKETNVFVSLDLDGNGEYDVDTGIGFLDHMLEQLSRHSLIDLKVRAQGDLHIDFHHTTEDTGIVIGEAVRKALGDFKGIRRYATAIIPMDETCTRVSIDVSQRPYLIWKVGFTKPKLGDMDTELFKEWFQAFAQNAGITLHIENMYGDNNHHIVESCFKGLARALRDAIEIDPRAANRIPSTKGVLGN</sequence>
<reference key="1">
    <citation type="journal article" date="2011" name="Stand. Genomic Sci.">
        <title>Complete genome sequence of Parvibaculum lavamentivorans type strain (DS-1(T)).</title>
        <authorList>
            <person name="Schleheck D."/>
            <person name="Weiss M."/>
            <person name="Pitluck S."/>
            <person name="Bruce D."/>
            <person name="Land M.L."/>
            <person name="Han S."/>
            <person name="Saunders E."/>
            <person name="Tapia R."/>
            <person name="Detter C."/>
            <person name="Brettin T."/>
            <person name="Han J."/>
            <person name="Woyke T."/>
            <person name="Goodwin L."/>
            <person name="Pennacchio L."/>
            <person name="Nolan M."/>
            <person name="Cook A.M."/>
            <person name="Kjelleberg S."/>
            <person name="Thomas T."/>
        </authorList>
    </citation>
    <scope>NUCLEOTIDE SEQUENCE [LARGE SCALE GENOMIC DNA]</scope>
    <source>
        <strain>DS-1 / DSM 13023 / NCIMB 13966</strain>
    </source>
</reference>